<feature type="chain" id="PRO_1000015725" description="Elongation factor Tu">
    <location>
        <begin position="1"/>
        <end position="399"/>
    </location>
</feature>
<feature type="domain" description="tr-type G">
    <location>
        <begin position="10"/>
        <end position="204"/>
    </location>
</feature>
<feature type="region of interest" description="G1" evidence="1">
    <location>
        <begin position="19"/>
        <end position="26"/>
    </location>
</feature>
<feature type="region of interest" description="G2" evidence="1">
    <location>
        <begin position="60"/>
        <end position="64"/>
    </location>
</feature>
<feature type="region of interest" description="G3" evidence="1">
    <location>
        <begin position="81"/>
        <end position="84"/>
    </location>
</feature>
<feature type="region of interest" description="G4" evidence="1">
    <location>
        <begin position="136"/>
        <end position="139"/>
    </location>
</feature>
<feature type="region of interest" description="G5" evidence="1">
    <location>
        <begin position="174"/>
        <end position="176"/>
    </location>
</feature>
<feature type="binding site" evidence="2">
    <location>
        <begin position="19"/>
        <end position="26"/>
    </location>
    <ligand>
        <name>GTP</name>
        <dbReference type="ChEBI" id="CHEBI:37565"/>
    </ligand>
</feature>
<feature type="binding site" evidence="2">
    <location>
        <position position="26"/>
    </location>
    <ligand>
        <name>Mg(2+)</name>
        <dbReference type="ChEBI" id="CHEBI:18420"/>
    </ligand>
</feature>
<feature type="binding site" evidence="2">
    <location>
        <begin position="81"/>
        <end position="85"/>
    </location>
    <ligand>
        <name>GTP</name>
        <dbReference type="ChEBI" id="CHEBI:37565"/>
    </ligand>
</feature>
<feature type="binding site" evidence="2">
    <location>
        <begin position="136"/>
        <end position="139"/>
    </location>
    <ligand>
        <name>GTP</name>
        <dbReference type="ChEBI" id="CHEBI:37565"/>
    </ligand>
</feature>
<gene>
    <name evidence="2" type="primary">tuf</name>
    <name type="ordered locus">P9303_23641</name>
</gene>
<reference key="1">
    <citation type="journal article" date="2007" name="PLoS Genet.">
        <title>Patterns and implications of gene gain and loss in the evolution of Prochlorococcus.</title>
        <authorList>
            <person name="Kettler G.C."/>
            <person name="Martiny A.C."/>
            <person name="Huang K."/>
            <person name="Zucker J."/>
            <person name="Coleman M.L."/>
            <person name="Rodrigue S."/>
            <person name="Chen F."/>
            <person name="Lapidus A."/>
            <person name="Ferriera S."/>
            <person name="Johnson J."/>
            <person name="Steglich C."/>
            <person name="Church G.M."/>
            <person name="Richardson P."/>
            <person name="Chisholm S.W."/>
        </authorList>
    </citation>
    <scope>NUCLEOTIDE SEQUENCE [LARGE SCALE GENOMIC DNA]</scope>
    <source>
        <strain>MIT 9303</strain>
    </source>
</reference>
<comment type="function">
    <text evidence="2">GTP hydrolase that promotes the GTP-dependent binding of aminoacyl-tRNA to the A-site of ribosomes during protein biosynthesis.</text>
</comment>
<comment type="catalytic activity">
    <reaction evidence="2">
        <text>GTP + H2O = GDP + phosphate + H(+)</text>
        <dbReference type="Rhea" id="RHEA:19669"/>
        <dbReference type="ChEBI" id="CHEBI:15377"/>
        <dbReference type="ChEBI" id="CHEBI:15378"/>
        <dbReference type="ChEBI" id="CHEBI:37565"/>
        <dbReference type="ChEBI" id="CHEBI:43474"/>
        <dbReference type="ChEBI" id="CHEBI:58189"/>
        <dbReference type="EC" id="3.6.5.3"/>
    </reaction>
    <physiologicalReaction direction="left-to-right" evidence="2">
        <dbReference type="Rhea" id="RHEA:19670"/>
    </physiologicalReaction>
</comment>
<comment type="subunit">
    <text evidence="2">Monomer.</text>
</comment>
<comment type="subcellular location">
    <subcellularLocation>
        <location evidence="2">Cytoplasm</location>
    </subcellularLocation>
</comment>
<comment type="similarity">
    <text evidence="2">Belongs to the TRAFAC class translation factor GTPase superfamily. Classic translation factor GTPase family. EF-Tu/EF-1A subfamily.</text>
</comment>
<sequence>MAREKFERNKPHVNIGTIGHVDHGKTTLTAAITSVLAKKGQAKVQDYAEIDGAPEERERGITINTAHVEYETDGRHYAHVDCPGHADYVKNMITGAAQMDGAILVCAATDGPMAQTKEHILLAKQVGVPALVVALNKCDMVDDEEIIELVEMEIRELLSSYDFPGDDIPIVQVSGLKAIEGEAEWEAKIDELMDAVDTSIPEPEREIEKPFLMAVEDVFSITGRGTVATGRIERGKVKKGEEIEIVGIRDSRKTTVTGVEMFRKDLDEGLAGDNCGLLLRGIEKEDIERGMVLVKPGSITPHTKFEGQVYVLKKEEGGRHTPFFAGYRPQFYIRTTDVTGQITAFTAEDGSNVEMVMPGDNIKMTGELICPVAIEQGMRFAIREGGRTIGAGVVSKIIQ</sequence>
<name>EFTU_PROM3</name>
<dbReference type="EC" id="3.6.5.3" evidence="2"/>
<dbReference type="EMBL" id="CP000554">
    <property type="protein sequence ID" value="ABM79097.1"/>
    <property type="molecule type" value="Genomic_DNA"/>
</dbReference>
<dbReference type="RefSeq" id="WP_011826958.1">
    <property type="nucleotide sequence ID" value="NC_008820.1"/>
</dbReference>
<dbReference type="SMR" id="A2CC87"/>
<dbReference type="STRING" id="59922.P9303_23641"/>
<dbReference type="KEGG" id="pmf:P9303_23641"/>
<dbReference type="HOGENOM" id="CLU_007265_0_1_3"/>
<dbReference type="BioCyc" id="PMAR59922:G1G80-2078-MONOMER"/>
<dbReference type="Proteomes" id="UP000002274">
    <property type="component" value="Chromosome"/>
</dbReference>
<dbReference type="GO" id="GO:0005829">
    <property type="term" value="C:cytosol"/>
    <property type="evidence" value="ECO:0007669"/>
    <property type="project" value="TreeGrafter"/>
</dbReference>
<dbReference type="GO" id="GO:0005525">
    <property type="term" value="F:GTP binding"/>
    <property type="evidence" value="ECO:0007669"/>
    <property type="project" value="UniProtKB-UniRule"/>
</dbReference>
<dbReference type="GO" id="GO:0003924">
    <property type="term" value="F:GTPase activity"/>
    <property type="evidence" value="ECO:0007669"/>
    <property type="project" value="InterPro"/>
</dbReference>
<dbReference type="GO" id="GO:0003746">
    <property type="term" value="F:translation elongation factor activity"/>
    <property type="evidence" value="ECO:0007669"/>
    <property type="project" value="UniProtKB-UniRule"/>
</dbReference>
<dbReference type="CDD" id="cd01884">
    <property type="entry name" value="EF_Tu"/>
    <property type="match status" value="1"/>
</dbReference>
<dbReference type="CDD" id="cd03697">
    <property type="entry name" value="EFTU_II"/>
    <property type="match status" value="1"/>
</dbReference>
<dbReference type="CDD" id="cd03707">
    <property type="entry name" value="EFTU_III"/>
    <property type="match status" value="1"/>
</dbReference>
<dbReference type="FunFam" id="2.40.30.10:FF:000001">
    <property type="entry name" value="Elongation factor Tu"/>
    <property type="match status" value="1"/>
</dbReference>
<dbReference type="FunFam" id="3.40.50.300:FF:000003">
    <property type="entry name" value="Elongation factor Tu"/>
    <property type="match status" value="1"/>
</dbReference>
<dbReference type="Gene3D" id="3.40.50.300">
    <property type="entry name" value="P-loop containing nucleotide triphosphate hydrolases"/>
    <property type="match status" value="1"/>
</dbReference>
<dbReference type="Gene3D" id="2.40.30.10">
    <property type="entry name" value="Translation factors"/>
    <property type="match status" value="2"/>
</dbReference>
<dbReference type="HAMAP" id="MF_00118_B">
    <property type="entry name" value="EF_Tu_B"/>
    <property type="match status" value="1"/>
</dbReference>
<dbReference type="InterPro" id="IPR041709">
    <property type="entry name" value="EF-Tu_GTP-bd"/>
</dbReference>
<dbReference type="InterPro" id="IPR050055">
    <property type="entry name" value="EF-Tu_GTPase"/>
</dbReference>
<dbReference type="InterPro" id="IPR004161">
    <property type="entry name" value="EFTu-like_2"/>
</dbReference>
<dbReference type="InterPro" id="IPR033720">
    <property type="entry name" value="EFTU_2"/>
</dbReference>
<dbReference type="InterPro" id="IPR031157">
    <property type="entry name" value="G_TR_CS"/>
</dbReference>
<dbReference type="InterPro" id="IPR027417">
    <property type="entry name" value="P-loop_NTPase"/>
</dbReference>
<dbReference type="InterPro" id="IPR005225">
    <property type="entry name" value="Small_GTP-bd"/>
</dbReference>
<dbReference type="InterPro" id="IPR000795">
    <property type="entry name" value="T_Tr_GTP-bd_dom"/>
</dbReference>
<dbReference type="InterPro" id="IPR009000">
    <property type="entry name" value="Transl_B-barrel_sf"/>
</dbReference>
<dbReference type="InterPro" id="IPR009001">
    <property type="entry name" value="Transl_elong_EF1A/Init_IF2_C"/>
</dbReference>
<dbReference type="InterPro" id="IPR004541">
    <property type="entry name" value="Transl_elong_EFTu/EF1A_bac/org"/>
</dbReference>
<dbReference type="InterPro" id="IPR004160">
    <property type="entry name" value="Transl_elong_EFTu/EF1A_C"/>
</dbReference>
<dbReference type="NCBIfam" id="TIGR00485">
    <property type="entry name" value="EF-Tu"/>
    <property type="match status" value="1"/>
</dbReference>
<dbReference type="NCBIfam" id="NF000766">
    <property type="entry name" value="PRK00049.1"/>
    <property type="match status" value="1"/>
</dbReference>
<dbReference type="NCBIfam" id="NF009372">
    <property type="entry name" value="PRK12735.1"/>
    <property type="match status" value="1"/>
</dbReference>
<dbReference type="NCBIfam" id="NF009373">
    <property type="entry name" value="PRK12736.1"/>
    <property type="match status" value="1"/>
</dbReference>
<dbReference type="NCBIfam" id="TIGR00231">
    <property type="entry name" value="small_GTP"/>
    <property type="match status" value="1"/>
</dbReference>
<dbReference type="PANTHER" id="PTHR43721:SF22">
    <property type="entry name" value="ELONGATION FACTOR TU, MITOCHONDRIAL"/>
    <property type="match status" value="1"/>
</dbReference>
<dbReference type="PANTHER" id="PTHR43721">
    <property type="entry name" value="ELONGATION FACTOR TU-RELATED"/>
    <property type="match status" value="1"/>
</dbReference>
<dbReference type="Pfam" id="PF00009">
    <property type="entry name" value="GTP_EFTU"/>
    <property type="match status" value="1"/>
</dbReference>
<dbReference type="Pfam" id="PF03144">
    <property type="entry name" value="GTP_EFTU_D2"/>
    <property type="match status" value="1"/>
</dbReference>
<dbReference type="Pfam" id="PF03143">
    <property type="entry name" value="GTP_EFTU_D3"/>
    <property type="match status" value="1"/>
</dbReference>
<dbReference type="PRINTS" id="PR00315">
    <property type="entry name" value="ELONGATNFCT"/>
</dbReference>
<dbReference type="SUPFAM" id="SSF50465">
    <property type="entry name" value="EF-Tu/eEF-1alpha/eIF2-gamma C-terminal domain"/>
    <property type="match status" value="1"/>
</dbReference>
<dbReference type="SUPFAM" id="SSF52540">
    <property type="entry name" value="P-loop containing nucleoside triphosphate hydrolases"/>
    <property type="match status" value="1"/>
</dbReference>
<dbReference type="SUPFAM" id="SSF50447">
    <property type="entry name" value="Translation proteins"/>
    <property type="match status" value="1"/>
</dbReference>
<dbReference type="PROSITE" id="PS00301">
    <property type="entry name" value="G_TR_1"/>
    <property type="match status" value="1"/>
</dbReference>
<dbReference type="PROSITE" id="PS51722">
    <property type="entry name" value="G_TR_2"/>
    <property type="match status" value="1"/>
</dbReference>
<evidence type="ECO:0000250" key="1"/>
<evidence type="ECO:0000255" key="2">
    <source>
        <dbReference type="HAMAP-Rule" id="MF_00118"/>
    </source>
</evidence>
<organism>
    <name type="scientific">Prochlorococcus marinus (strain MIT 9303)</name>
    <dbReference type="NCBI Taxonomy" id="59922"/>
    <lineage>
        <taxon>Bacteria</taxon>
        <taxon>Bacillati</taxon>
        <taxon>Cyanobacteriota</taxon>
        <taxon>Cyanophyceae</taxon>
        <taxon>Synechococcales</taxon>
        <taxon>Prochlorococcaceae</taxon>
        <taxon>Prochlorococcus</taxon>
    </lineage>
</organism>
<proteinExistence type="inferred from homology"/>
<accession>A2CC87</accession>
<protein>
    <recommendedName>
        <fullName evidence="2">Elongation factor Tu</fullName>
        <shortName evidence="2">EF-Tu</shortName>
        <ecNumber evidence="2">3.6.5.3</ecNumber>
    </recommendedName>
</protein>
<keyword id="KW-0963">Cytoplasm</keyword>
<keyword id="KW-0251">Elongation factor</keyword>
<keyword id="KW-0342">GTP-binding</keyword>
<keyword id="KW-0378">Hydrolase</keyword>
<keyword id="KW-0460">Magnesium</keyword>
<keyword id="KW-0479">Metal-binding</keyword>
<keyword id="KW-0547">Nucleotide-binding</keyword>
<keyword id="KW-0648">Protein biosynthesis</keyword>